<protein>
    <recommendedName>
        <fullName evidence="1">Activin receptor type-2A</fullName>
        <ecNumber evidence="1">2.7.11.30</ecNumber>
    </recommendedName>
    <alternativeName>
        <fullName>Activin receptor type IIA</fullName>
        <shortName>ACTR-IIA</shortName>
    </alternativeName>
</protein>
<keyword id="KW-0067">ATP-binding</keyword>
<keyword id="KW-1003">Cell membrane</keyword>
<keyword id="KW-1015">Disulfide bond</keyword>
<keyword id="KW-0325">Glycoprotein</keyword>
<keyword id="KW-0418">Kinase</keyword>
<keyword id="KW-0472">Membrane</keyword>
<keyword id="KW-0547">Nucleotide-binding</keyword>
<keyword id="KW-0675">Receptor</keyword>
<keyword id="KW-1185">Reference proteome</keyword>
<keyword id="KW-0723">Serine/threonine-protein kinase</keyword>
<keyword id="KW-0732">Signal</keyword>
<keyword id="KW-0808">Transferase</keyword>
<keyword id="KW-0812">Transmembrane</keyword>
<keyword id="KW-1133">Transmembrane helix</keyword>
<evidence type="ECO:0000250" key="1">
    <source>
        <dbReference type="UniProtKB" id="P27038"/>
    </source>
</evidence>
<evidence type="ECO:0000250" key="2">
    <source>
        <dbReference type="UniProtKB" id="P38445"/>
    </source>
</evidence>
<evidence type="ECO:0000255" key="3"/>
<evidence type="ECO:0000255" key="4">
    <source>
        <dbReference type="PROSITE-ProRule" id="PRU00159"/>
    </source>
</evidence>
<evidence type="ECO:0000255" key="5">
    <source>
        <dbReference type="PROSITE-ProRule" id="PRU10027"/>
    </source>
</evidence>
<evidence type="ECO:0000305" key="6"/>
<name>AVR2A_XENLA</name>
<feature type="signal peptide" evidence="3">
    <location>
        <begin position="1"/>
        <end position="20"/>
    </location>
</feature>
<feature type="chain" id="PRO_0000024402" description="Activin receptor type-2A">
    <location>
        <begin position="21"/>
        <end position="514"/>
    </location>
</feature>
<feature type="topological domain" description="Extracellular" evidence="3">
    <location>
        <begin position="21"/>
        <end position="136"/>
    </location>
</feature>
<feature type="transmembrane region" description="Helical" evidence="3">
    <location>
        <begin position="137"/>
        <end position="162"/>
    </location>
</feature>
<feature type="topological domain" description="Cytoplasmic" evidence="3">
    <location>
        <begin position="163"/>
        <end position="514"/>
    </location>
</feature>
<feature type="domain" description="Protein kinase" evidence="4">
    <location>
        <begin position="193"/>
        <end position="486"/>
    </location>
</feature>
<feature type="active site" description="Proton acceptor" evidence="4 5">
    <location>
        <position position="323"/>
    </location>
</feature>
<feature type="binding site" evidence="4">
    <location>
        <begin position="199"/>
        <end position="207"/>
    </location>
    <ligand>
        <name>ATP</name>
        <dbReference type="ChEBI" id="CHEBI:30616"/>
    </ligand>
</feature>
<feature type="binding site" evidence="4">
    <location>
        <position position="220"/>
    </location>
    <ligand>
        <name>ATP</name>
        <dbReference type="ChEBI" id="CHEBI:30616"/>
    </ligand>
</feature>
<feature type="glycosylation site" description="N-linked (GlcNAc...) asparagine" evidence="3">
    <location>
        <position position="46"/>
    </location>
</feature>
<feature type="glycosylation site" description="N-linked (GlcNAc...) asparagine" evidence="3">
    <location>
        <position position="67"/>
    </location>
</feature>
<feature type="glycosylation site" description="N-linked (GlcNAc...) asparagine" evidence="3">
    <location>
        <position position="88"/>
    </location>
</feature>
<feature type="disulfide bond" evidence="2">
    <location>
        <begin position="31"/>
        <end position="61"/>
    </location>
</feature>
<feature type="disulfide bond" evidence="2">
    <location>
        <begin position="51"/>
        <end position="79"/>
    </location>
</feature>
<feature type="disulfide bond" evidence="2">
    <location>
        <begin position="86"/>
        <end position="105"/>
    </location>
</feature>
<feature type="disulfide bond" evidence="2">
    <location>
        <begin position="92"/>
        <end position="104"/>
    </location>
</feature>
<feature type="disulfide bond" evidence="2">
    <location>
        <begin position="106"/>
        <end position="111"/>
    </location>
</feature>
<reference key="1">
    <citation type="journal article" date="1991" name="Biochem. Biophys. Res. Commun.">
        <title>Activin receptor mRNA is expressed early in Xenopus embryogenesis and the level of the expression affects the body axis formation.</title>
        <authorList>
            <person name="Kondo M."/>
            <person name="Tashiro K."/>
            <person name="Fujii G."/>
            <person name="Asano M."/>
            <person name="Miyoshi R."/>
            <person name="Yamada R."/>
            <person name="Muramatsu M."/>
            <person name="Shiokawa K."/>
        </authorList>
    </citation>
    <scope>NUCLEOTIDE SEQUENCE [MRNA]</scope>
</reference>
<reference key="2">
    <citation type="submission" date="2004-03" db="EMBL/GenBank/DDBJ databases">
        <authorList>
            <consortium name="NIH - Xenopus Gene Collection (XGC) project"/>
        </authorList>
    </citation>
    <scope>NUCLEOTIDE SEQUENCE [LARGE SCALE MRNA]</scope>
    <source>
        <tissue>Embryo</tissue>
    </source>
</reference>
<comment type="function">
    <text>Receptor for activin A, activin B and inhibin A. Involved in transmembrane signaling.</text>
</comment>
<comment type="catalytic activity">
    <reaction evidence="1">
        <text>L-threonyl-[receptor-protein] + ATP = O-phospho-L-threonyl-[receptor-protein] + ADP + H(+)</text>
        <dbReference type="Rhea" id="RHEA:44880"/>
        <dbReference type="Rhea" id="RHEA-COMP:11024"/>
        <dbReference type="Rhea" id="RHEA-COMP:11025"/>
        <dbReference type="ChEBI" id="CHEBI:15378"/>
        <dbReference type="ChEBI" id="CHEBI:30013"/>
        <dbReference type="ChEBI" id="CHEBI:30616"/>
        <dbReference type="ChEBI" id="CHEBI:61977"/>
        <dbReference type="ChEBI" id="CHEBI:456216"/>
        <dbReference type="EC" id="2.7.11.30"/>
    </reaction>
    <physiologicalReaction direction="left-to-right" evidence="1">
        <dbReference type="Rhea" id="RHEA:44881"/>
    </physiologicalReaction>
</comment>
<comment type="catalytic activity">
    <reaction evidence="1">
        <text>L-seryl-[receptor-protein] + ATP = O-phospho-L-seryl-[receptor-protein] + ADP + H(+)</text>
        <dbReference type="Rhea" id="RHEA:18673"/>
        <dbReference type="Rhea" id="RHEA-COMP:11022"/>
        <dbReference type="Rhea" id="RHEA-COMP:11023"/>
        <dbReference type="ChEBI" id="CHEBI:15378"/>
        <dbReference type="ChEBI" id="CHEBI:29999"/>
        <dbReference type="ChEBI" id="CHEBI:30616"/>
        <dbReference type="ChEBI" id="CHEBI:83421"/>
        <dbReference type="ChEBI" id="CHEBI:456216"/>
        <dbReference type="EC" id="2.7.11.30"/>
    </reaction>
    <physiologicalReaction direction="left-to-right" evidence="1">
        <dbReference type="Rhea" id="RHEA:18674"/>
    </physiologicalReaction>
</comment>
<comment type="subcellular location">
    <subcellularLocation>
        <location evidence="1">Cell membrane</location>
        <topology evidence="3">Single-pass type I membrane protein</topology>
    </subcellularLocation>
</comment>
<comment type="similarity">
    <text evidence="6">Belongs to the protein kinase superfamily. TKL Ser/Thr protein kinase family. TGFB receptor subfamily.</text>
</comment>
<sequence length="514" mass="57904">MGAATKLAFAVFLISCSSAGSILGRSETKECIYYNANWEKDKTNSNGTEICYGDNDKRKHCFATWKNISGSIEIVKQGCWLDDINCYNKSKCTEKKDSPDVFFCCCEGNYCNEKFYHSPEMEVTQPTSNPVTTKPPLFNTLLYSLVPIMVVAVIVLFSFWMYRHHKLAYPPVLVPTQDPGPPPPSPLLGLKPLQLLEVKARGRFGCVWKAQLLNETVAVKIFPVQDKLSWQNEYEIYSLPGMKHENILYFIGAEKRGTNLDTDLWLITAFHEKGSLTDYLKANVVSWNELCLIAETMARGLSHLHEDIPGLKDGHKPAVAHRDIKSKNVLLKNNLTACIADFGLALKFEAGKSAGDTHGQVGTRRYMAPEVLEGAINFQRDAFLRIDMYAFGLVLWELASRCTASDGPVDEYMLPFEEEVGQHPSLEDMQEVVVHKKKRPILRECWQKHAGMAMLCETIEECWDHDAEARLSAGCVEERIIQMQKLTNIITTEDIVTVVTMVTNVDFPPKESSL</sequence>
<accession>P27039</accession>
<accession>Q5D043</accession>
<dbReference type="EC" id="2.7.11.30" evidence="1"/>
<dbReference type="EMBL" id="S70930">
    <property type="protein sequence ID" value="AAB20638.1"/>
    <property type="molecule type" value="mRNA"/>
</dbReference>
<dbReference type="EMBL" id="BC066770">
    <property type="protein sequence ID" value="AAH66770.1"/>
    <property type="molecule type" value="mRNA"/>
</dbReference>
<dbReference type="PIR" id="JQ1317">
    <property type="entry name" value="JQ1317"/>
</dbReference>
<dbReference type="RefSeq" id="NP_001084061.1">
    <property type="nucleotide sequence ID" value="NM_001090592.1"/>
</dbReference>
<dbReference type="SMR" id="P27039"/>
<dbReference type="GlyCosmos" id="P27039">
    <property type="glycosylation" value="3 sites, No reported glycans"/>
</dbReference>
<dbReference type="DNASU" id="399283"/>
<dbReference type="GeneID" id="399283"/>
<dbReference type="KEGG" id="xla:399283"/>
<dbReference type="AGR" id="Xenbase:XB-GENE-865037"/>
<dbReference type="CTD" id="399283"/>
<dbReference type="Xenbase" id="XB-GENE-865037">
    <property type="gene designation" value="acvr2a.L"/>
</dbReference>
<dbReference type="OMA" id="CNQNFTW"/>
<dbReference type="OrthoDB" id="547665at2759"/>
<dbReference type="BRENDA" id="2.7.10.2">
    <property type="organism ID" value="6725"/>
</dbReference>
<dbReference type="Proteomes" id="UP000186698">
    <property type="component" value="Chromosome 9_10L"/>
</dbReference>
<dbReference type="Bgee" id="399283">
    <property type="expression patterns" value="Expressed in lung and 19 other cell types or tissues"/>
</dbReference>
<dbReference type="GO" id="GO:0048179">
    <property type="term" value="C:activin receptor complex"/>
    <property type="evidence" value="ECO:0000318"/>
    <property type="project" value="GO_Central"/>
</dbReference>
<dbReference type="GO" id="GO:0005886">
    <property type="term" value="C:plasma membrane"/>
    <property type="evidence" value="ECO:0000250"/>
    <property type="project" value="UniProtKB"/>
</dbReference>
<dbReference type="GO" id="GO:0048185">
    <property type="term" value="F:activin binding"/>
    <property type="evidence" value="ECO:0000318"/>
    <property type="project" value="GO_Central"/>
</dbReference>
<dbReference type="GO" id="GO:0017002">
    <property type="term" value="F:activin receptor activity"/>
    <property type="evidence" value="ECO:0000250"/>
    <property type="project" value="UniProtKB"/>
</dbReference>
<dbReference type="GO" id="GO:0005524">
    <property type="term" value="F:ATP binding"/>
    <property type="evidence" value="ECO:0007669"/>
    <property type="project" value="UniProtKB-KW"/>
</dbReference>
<dbReference type="GO" id="GO:0032924">
    <property type="term" value="P:activin receptor signaling pathway"/>
    <property type="evidence" value="ECO:0000318"/>
    <property type="project" value="GO_Central"/>
</dbReference>
<dbReference type="GO" id="GO:0071363">
    <property type="term" value="P:cellular response to growth factor stimulus"/>
    <property type="evidence" value="ECO:0000318"/>
    <property type="project" value="GO_Central"/>
</dbReference>
<dbReference type="GO" id="GO:0007389">
    <property type="term" value="P:pattern specification process"/>
    <property type="evidence" value="ECO:0000318"/>
    <property type="project" value="GO_Central"/>
</dbReference>
<dbReference type="CDD" id="cd14141">
    <property type="entry name" value="STKc_ACVR2a"/>
    <property type="match status" value="1"/>
</dbReference>
<dbReference type="CDD" id="cd23631">
    <property type="entry name" value="TFP_LU_ECD_ACVR2A"/>
    <property type="match status" value="1"/>
</dbReference>
<dbReference type="FunFam" id="1.10.510.10:FF:000099">
    <property type="entry name" value="Serine/threonine-protein kinase receptor"/>
    <property type="match status" value="1"/>
</dbReference>
<dbReference type="FunFam" id="2.10.60.10:FF:000002">
    <property type="entry name" value="Serine/threonine-protein kinase receptor"/>
    <property type="match status" value="1"/>
</dbReference>
<dbReference type="FunFam" id="3.30.200.20:FF:000094">
    <property type="entry name" value="Serine/threonine-protein kinase receptor"/>
    <property type="match status" value="1"/>
</dbReference>
<dbReference type="Gene3D" id="2.10.60.10">
    <property type="entry name" value="CD59"/>
    <property type="match status" value="1"/>
</dbReference>
<dbReference type="Gene3D" id="3.30.200.20">
    <property type="entry name" value="Phosphorylase Kinase, domain 1"/>
    <property type="match status" value="1"/>
</dbReference>
<dbReference type="Gene3D" id="1.10.510.10">
    <property type="entry name" value="Transferase(Phosphotransferase) domain 1"/>
    <property type="match status" value="1"/>
</dbReference>
<dbReference type="InterPro" id="IPR000472">
    <property type="entry name" value="Activin_recp"/>
</dbReference>
<dbReference type="InterPro" id="IPR011009">
    <property type="entry name" value="Kinase-like_dom_sf"/>
</dbReference>
<dbReference type="InterPro" id="IPR000719">
    <property type="entry name" value="Prot_kinase_dom"/>
</dbReference>
<dbReference type="InterPro" id="IPR008271">
    <property type="entry name" value="Ser/Thr_kinase_AS"/>
</dbReference>
<dbReference type="InterPro" id="IPR045860">
    <property type="entry name" value="Snake_toxin-like_sf"/>
</dbReference>
<dbReference type="InterPro" id="IPR000333">
    <property type="entry name" value="TGFB_receptor"/>
</dbReference>
<dbReference type="PANTHER" id="PTHR23255:SF64">
    <property type="entry name" value="ACTIVIN RECEPTOR TYPE-2A"/>
    <property type="match status" value="1"/>
</dbReference>
<dbReference type="PANTHER" id="PTHR23255">
    <property type="entry name" value="TRANSFORMING GROWTH FACTOR-BETA RECEPTOR TYPE I AND II"/>
    <property type="match status" value="1"/>
</dbReference>
<dbReference type="Pfam" id="PF01064">
    <property type="entry name" value="Activin_recp"/>
    <property type="match status" value="1"/>
</dbReference>
<dbReference type="Pfam" id="PF00069">
    <property type="entry name" value="Pkinase"/>
    <property type="match status" value="1"/>
</dbReference>
<dbReference type="PRINTS" id="PR00653">
    <property type="entry name" value="ACTIVIN2R"/>
</dbReference>
<dbReference type="SMART" id="SM00220">
    <property type="entry name" value="S_TKc"/>
    <property type="match status" value="1"/>
</dbReference>
<dbReference type="SUPFAM" id="SSF56112">
    <property type="entry name" value="Protein kinase-like (PK-like)"/>
    <property type="match status" value="1"/>
</dbReference>
<dbReference type="SUPFAM" id="SSF57302">
    <property type="entry name" value="Snake toxin-like"/>
    <property type="match status" value="1"/>
</dbReference>
<dbReference type="PROSITE" id="PS50011">
    <property type="entry name" value="PROTEIN_KINASE_DOM"/>
    <property type="match status" value="1"/>
</dbReference>
<dbReference type="PROSITE" id="PS00108">
    <property type="entry name" value="PROTEIN_KINASE_ST"/>
    <property type="match status" value="1"/>
</dbReference>
<organism>
    <name type="scientific">Xenopus laevis</name>
    <name type="common">African clawed frog</name>
    <dbReference type="NCBI Taxonomy" id="8355"/>
    <lineage>
        <taxon>Eukaryota</taxon>
        <taxon>Metazoa</taxon>
        <taxon>Chordata</taxon>
        <taxon>Craniata</taxon>
        <taxon>Vertebrata</taxon>
        <taxon>Euteleostomi</taxon>
        <taxon>Amphibia</taxon>
        <taxon>Batrachia</taxon>
        <taxon>Anura</taxon>
        <taxon>Pipoidea</taxon>
        <taxon>Pipidae</taxon>
        <taxon>Xenopodinae</taxon>
        <taxon>Xenopus</taxon>
        <taxon>Xenopus</taxon>
    </lineage>
</organism>
<gene>
    <name type="primary">acvr2a</name>
    <name type="synonym">acvr2</name>
</gene>
<proteinExistence type="evidence at transcript level"/>